<keyword id="KW-0903">Direct protein sequencing</keyword>
<keyword id="KW-0551">Lipid droplet</keyword>
<keyword id="KW-0472">Membrane</keyword>
<keyword id="KW-0677">Repeat</keyword>
<keyword id="KW-0812">Transmembrane</keyword>
<keyword id="KW-1133">Transmembrane helix</keyword>
<protein>
    <recommendedName>
        <fullName>Major oleosin NAP-II</fullName>
    </recommendedName>
</protein>
<comment type="function">
    <text>May have a structural role to stabilize the lipid body during desiccation of the seed by preventing coalescence of the oil. Probably interacts with both lipid and phospholipid moieties of lipid bodies. May also provide recognition signals for specific lipase anchorage in lipolysis during seedling growth.</text>
</comment>
<comment type="subcellular location">
    <subcellularLocation>
        <location>Lipid droplet</location>
    </subcellularLocation>
    <subcellularLocation>
        <location>Membrane</location>
        <topology>Multi-pass membrane protein</topology>
    </subcellularLocation>
    <text>Surface of oil bodies. Oleosins exist at a monolayer lipid/water interface.</text>
</comment>
<comment type="developmental stage">
    <text>Accumulates during the desiccation phase of embryo development.</text>
</comment>
<comment type="similarity">
    <text evidence="3">Belongs to the oleosin family.</text>
</comment>
<evidence type="ECO:0000255" key="1"/>
<evidence type="ECO:0000256" key="2">
    <source>
        <dbReference type="SAM" id="MobiDB-lite"/>
    </source>
</evidence>
<evidence type="ECO:0000305" key="3"/>
<proteinExistence type="evidence at protein level"/>
<reference key="1">
    <citation type="journal article" date="1991" name="Biochim. Biophys. Acta">
        <title>A class of amphipathic proteins associated with lipid storage bodies in plants. Possible similarities with animal serum apolipoproteins.</title>
        <authorList>
            <person name="Murphy D.J."/>
            <person name="Keen J.N."/>
            <person name="O'Sullivan J.N."/>
            <person name="Au D.M.Y."/>
            <person name="Edwards E.-W."/>
            <person name="Jackson P.J."/>
            <person name="Cummins I."/>
            <person name="Gibbons T."/>
            <person name="Shaw C.H."/>
            <person name="Ryan A.J."/>
        </authorList>
    </citation>
    <scope>NUCLEOTIDE SEQUENCE [MRNA]</scope>
    <scope>PROTEIN SEQUENCE OF 43-77</scope>
    <source>
        <tissue>Seed</tissue>
    </source>
</reference>
<name>OLEO2_BRANA</name>
<dbReference type="EMBL" id="X58000">
    <property type="protein sequence ID" value="CAA41064.1"/>
    <property type="molecule type" value="mRNA"/>
</dbReference>
<dbReference type="PIR" id="S70915">
    <property type="entry name" value="S70915"/>
</dbReference>
<dbReference type="SMR" id="P29111"/>
<dbReference type="GO" id="GO:0016020">
    <property type="term" value="C:membrane"/>
    <property type="evidence" value="ECO:0007669"/>
    <property type="project" value="UniProtKB-SubCell"/>
</dbReference>
<dbReference type="GO" id="GO:0012511">
    <property type="term" value="C:monolayer-surrounded lipid storage body"/>
    <property type="evidence" value="ECO:0007669"/>
    <property type="project" value="InterPro"/>
</dbReference>
<dbReference type="GO" id="GO:0009791">
    <property type="term" value="P:post-embryonic development"/>
    <property type="evidence" value="ECO:0007669"/>
    <property type="project" value="UniProtKB-ARBA"/>
</dbReference>
<dbReference type="GO" id="GO:0048608">
    <property type="term" value="P:reproductive structure development"/>
    <property type="evidence" value="ECO:0007669"/>
    <property type="project" value="UniProtKB-ARBA"/>
</dbReference>
<dbReference type="InterPro" id="IPR000136">
    <property type="entry name" value="Oleosin"/>
</dbReference>
<dbReference type="PANTHER" id="PTHR33203">
    <property type="entry name" value="OLEOSIN"/>
    <property type="match status" value="1"/>
</dbReference>
<dbReference type="PANTHER" id="PTHR33203:SF46">
    <property type="entry name" value="OLEOSIN"/>
    <property type="match status" value="1"/>
</dbReference>
<dbReference type="Pfam" id="PF01277">
    <property type="entry name" value="Oleosin"/>
    <property type="match status" value="1"/>
</dbReference>
<dbReference type="PROSITE" id="PS00811">
    <property type="entry name" value="OLEOSINS"/>
    <property type="match status" value="1"/>
</dbReference>
<feature type="chain" id="PRO_0000108134" description="Major oleosin NAP-II">
    <location>
        <begin position="1" status="less than"/>
        <end position="175"/>
    </location>
</feature>
<feature type="transmembrane region" description="Helical" evidence="1">
    <location>
        <begin position="56"/>
        <end position="76"/>
    </location>
</feature>
<feature type="transmembrane region" description="Helical" evidence="1">
    <location>
        <begin position="78"/>
        <end position="98"/>
    </location>
</feature>
<feature type="transmembrane region" description="Helical" evidence="1">
    <location>
        <begin position="99"/>
        <end position="119"/>
    </location>
</feature>
<feature type="repeat">
    <location>
        <begin position="17"/>
        <end position="26"/>
    </location>
</feature>
<feature type="repeat">
    <location>
        <begin position="27"/>
        <end position="36"/>
    </location>
</feature>
<feature type="region of interest" description="Polar">
    <location>
        <begin position="1" status="less than"/>
        <end position="47"/>
    </location>
</feature>
<feature type="region of interest" description="Hydrophobic">
    <location>
        <begin position="48"/>
        <end position="119"/>
    </location>
</feature>
<feature type="region of interest" description="Disordered" evidence="2">
    <location>
        <begin position="151"/>
        <end position="175"/>
    </location>
</feature>
<feature type="sequence conflict" description="In Ref. 1; AA sequence." evidence="3" ref="1">
    <original>V</original>
    <variation>A</variation>
    <location>
        <position position="49"/>
    </location>
</feature>
<feature type="sequence conflict" description="In Ref. 1; AA sequence." evidence="3" ref="1">
    <original>L</original>
    <variation>A</variation>
    <location>
        <position position="66"/>
    </location>
</feature>
<feature type="sequence conflict" description="In Ref. 1; AA sequence." evidence="3" ref="1">
    <original>A</original>
    <variation>L</variation>
    <location>
        <position position="72"/>
    </location>
</feature>
<feature type="non-terminal residue">
    <location>
        <position position="1"/>
    </location>
</feature>
<accession>P29111</accession>
<organism>
    <name type="scientific">Brassica napus</name>
    <name type="common">Rape</name>
    <dbReference type="NCBI Taxonomy" id="3708"/>
    <lineage>
        <taxon>Eukaryota</taxon>
        <taxon>Viridiplantae</taxon>
        <taxon>Streptophyta</taxon>
        <taxon>Embryophyta</taxon>
        <taxon>Tracheophyta</taxon>
        <taxon>Spermatophyta</taxon>
        <taxon>Magnoliopsida</taxon>
        <taxon>eudicotyledons</taxon>
        <taxon>Gunneridae</taxon>
        <taxon>Pentapetalae</taxon>
        <taxon>rosids</taxon>
        <taxon>malvids</taxon>
        <taxon>Brassicales</taxon>
        <taxon>Brassicaceae</taxon>
        <taxon>Brassiceae</taxon>
        <taxon>Brassica</taxon>
    </lineage>
</organism>
<sequence length="175" mass="19349">RRDQYPRDRDQYSMIGRDRDKYSMIGRDRDQYNMYGRDYSKSRQIAKAVTAVTAGGSLLVLSSLTLVGTVIALTVATPLLVIFSPILVPALITVALLITGFLSSGGFGIAAITVFSWIYKYATGEHPQGSDKLDSARMKLGGKVQDMKDRAQYYGQQQTGGEDDRDRTRGTQHTT</sequence>